<name>EX7L_ERYLH</name>
<dbReference type="EC" id="3.1.11.6" evidence="1"/>
<dbReference type="EMBL" id="CP000157">
    <property type="protein sequence ID" value="ABC64634.1"/>
    <property type="molecule type" value="Genomic_DNA"/>
</dbReference>
<dbReference type="RefSeq" id="WP_011415456.1">
    <property type="nucleotide sequence ID" value="NC_007722.1"/>
</dbReference>
<dbReference type="SMR" id="Q2N6Q7"/>
<dbReference type="STRING" id="314225.ELI_12710"/>
<dbReference type="KEGG" id="eli:ELI_12710"/>
<dbReference type="eggNOG" id="COG1570">
    <property type="taxonomic scope" value="Bacteria"/>
</dbReference>
<dbReference type="HOGENOM" id="CLU_023625_3_1_5"/>
<dbReference type="OrthoDB" id="9802795at2"/>
<dbReference type="Proteomes" id="UP000008808">
    <property type="component" value="Chromosome"/>
</dbReference>
<dbReference type="GO" id="GO:0005737">
    <property type="term" value="C:cytoplasm"/>
    <property type="evidence" value="ECO:0007669"/>
    <property type="project" value="UniProtKB-SubCell"/>
</dbReference>
<dbReference type="GO" id="GO:0009318">
    <property type="term" value="C:exodeoxyribonuclease VII complex"/>
    <property type="evidence" value="ECO:0007669"/>
    <property type="project" value="InterPro"/>
</dbReference>
<dbReference type="GO" id="GO:0008855">
    <property type="term" value="F:exodeoxyribonuclease VII activity"/>
    <property type="evidence" value="ECO:0007669"/>
    <property type="project" value="UniProtKB-UniRule"/>
</dbReference>
<dbReference type="GO" id="GO:0003676">
    <property type="term" value="F:nucleic acid binding"/>
    <property type="evidence" value="ECO:0007669"/>
    <property type="project" value="InterPro"/>
</dbReference>
<dbReference type="GO" id="GO:0006308">
    <property type="term" value="P:DNA catabolic process"/>
    <property type="evidence" value="ECO:0007669"/>
    <property type="project" value="UniProtKB-UniRule"/>
</dbReference>
<dbReference type="CDD" id="cd04489">
    <property type="entry name" value="ExoVII_LU_OBF"/>
    <property type="match status" value="1"/>
</dbReference>
<dbReference type="HAMAP" id="MF_00378">
    <property type="entry name" value="Exonuc_7_L"/>
    <property type="match status" value="1"/>
</dbReference>
<dbReference type="InterPro" id="IPR003753">
    <property type="entry name" value="Exonuc_VII_L"/>
</dbReference>
<dbReference type="InterPro" id="IPR020579">
    <property type="entry name" value="Exonuc_VII_lsu_C"/>
</dbReference>
<dbReference type="InterPro" id="IPR025824">
    <property type="entry name" value="OB-fold_nuc-bd_dom"/>
</dbReference>
<dbReference type="NCBIfam" id="TIGR00237">
    <property type="entry name" value="xseA"/>
    <property type="match status" value="1"/>
</dbReference>
<dbReference type="PANTHER" id="PTHR30008">
    <property type="entry name" value="EXODEOXYRIBONUCLEASE 7 LARGE SUBUNIT"/>
    <property type="match status" value="1"/>
</dbReference>
<dbReference type="PANTHER" id="PTHR30008:SF0">
    <property type="entry name" value="EXODEOXYRIBONUCLEASE 7 LARGE SUBUNIT"/>
    <property type="match status" value="1"/>
</dbReference>
<dbReference type="Pfam" id="PF02601">
    <property type="entry name" value="Exonuc_VII_L"/>
    <property type="match status" value="1"/>
</dbReference>
<dbReference type="Pfam" id="PF13742">
    <property type="entry name" value="tRNA_anti_2"/>
    <property type="match status" value="1"/>
</dbReference>
<proteinExistence type="inferred from homology"/>
<keyword id="KW-0963">Cytoplasm</keyword>
<keyword id="KW-0269">Exonuclease</keyword>
<keyword id="KW-0378">Hydrolase</keyword>
<keyword id="KW-0540">Nuclease</keyword>
<keyword id="KW-1185">Reference proteome</keyword>
<evidence type="ECO:0000255" key="1">
    <source>
        <dbReference type="HAMAP-Rule" id="MF_00378"/>
    </source>
</evidence>
<evidence type="ECO:0000256" key="2">
    <source>
        <dbReference type="SAM" id="MobiDB-lite"/>
    </source>
</evidence>
<feature type="chain" id="PRO_0000303786" description="Exodeoxyribonuclease 7 large subunit">
    <location>
        <begin position="1"/>
        <end position="477"/>
    </location>
</feature>
<feature type="region of interest" description="Disordered" evidence="2">
    <location>
        <begin position="452"/>
        <end position="477"/>
    </location>
</feature>
<protein>
    <recommendedName>
        <fullName evidence="1">Exodeoxyribonuclease 7 large subunit</fullName>
        <ecNumber evidence="1">3.1.11.6</ecNumber>
    </recommendedName>
    <alternativeName>
        <fullName evidence="1">Exodeoxyribonuclease VII large subunit</fullName>
        <shortName evidence="1">Exonuclease VII large subunit</shortName>
    </alternativeName>
</protein>
<comment type="function">
    <text evidence="1">Bidirectionally degrades single-stranded DNA into large acid-insoluble oligonucleotides, which are then degraded further into small acid-soluble oligonucleotides.</text>
</comment>
<comment type="catalytic activity">
    <reaction evidence="1">
        <text>Exonucleolytic cleavage in either 5'- to 3'- or 3'- to 5'-direction to yield nucleoside 5'-phosphates.</text>
        <dbReference type="EC" id="3.1.11.6"/>
    </reaction>
</comment>
<comment type="subunit">
    <text evidence="1">Heterooligomer composed of large and small subunits.</text>
</comment>
<comment type="subcellular location">
    <subcellularLocation>
        <location evidence="1">Cytoplasm</location>
    </subcellularLocation>
</comment>
<comment type="similarity">
    <text evidence="1">Belongs to the XseA family.</text>
</comment>
<organism>
    <name type="scientific">Erythrobacter litoralis (strain HTCC2594)</name>
    <dbReference type="NCBI Taxonomy" id="314225"/>
    <lineage>
        <taxon>Bacteria</taxon>
        <taxon>Pseudomonadati</taxon>
        <taxon>Pseudomonadota</taxon>
        <taxon>Alphaproteobacteria</taxon>
        <taxon>Sphingomonadales</taxon>
        <taxon>Erythrobacteraceae</taxon>
        <taxon>Erythrobacter/Porphyrobacter group</taxon>
        <taxon>Erythrobacter</taxon>
    </lineage>
</organism>
<sequence length="477" mass="51620">MSDLIAQSRAGDNAEPLSVSALSQMLKRTVEDRFGYVRLRGELSGVKRAASGHMYCSLKDEKAVIDGVMWKGTTARLAFQPEDGLEVIATGKLTTYPGRSKYQIVLESLEMAGEGALLALLEKTRQRLEAEGLFARDRKRPLPFLPRTIGVVTSPTGAVIRDILHRLADRFPSHVLVWPVLVQGQGAAEQVSAAIRGFGAIKAGGEVPRPDLLIVARGGGSIEDLWSFNEEMVVRAIADSPIPVISAVGHETDTTLADYAADRRAPTPTAAAEIAVPVKGELAATLNDYAARQQRGVLRPLSLGRERLEARVQRLPTIETLLQPQAQKLDERVERLRGALRDRAAKGREALATQRLSPTMLQRAEREARRKLDQVRLAPALVERRAARDGERLAGLSRVLATLNPRAPLERGYALVRDADGKLVRAKGEATKQARLAVEFADGSLDVVPAGKAAAAPKRVKKSPPPGTSGAQEDLFG</sequence>
<gene>
    <name evidence="1" type="primary">xseA</name>
    <name type="ordered locus">ELI_12710</name>
</gene>
<accession>Q2N6Q7</accession>
<reference key="1">
    <citation type="journal article" date="2009" name="J. Bacteriol.">
        <title>Complete genome sequence of Erythrobacter litoralis HTCC2594.</title>
        <authorList>
            <person name="Oh H.M."/>
            <person name="Giovannoni S.J."/>
            <person name="Ferriera S."/>
            <person name="Johnson J."/>
            <person name="Cho J.C."/>
        </authorList>
    </citation>
    <scope>NUCLEOTIDE SEQUENCE [LARGE SCALE GENOMIC DNA]</scope>
    <source>
        <strain>HTCC2594</strain>
    </source>
</reference>